<name>RL44A_YEAST</name>
<keyword id="KW-0002">3D-structure</keyword>
<keyword id="KW-0046">Antibiotic resistance</keyword>
<keyword id="KW-0196">Cycloheximide resistance</keyword>
<keyword id="KW-0963">Cytoplasm</keyword>
<keyword id="KW-0903">Direct protein sequencing</keyword>
<keyword id="KW-0488">Methylation</keyword>
<keyword id="KW-1185">Reference proteome</keyword>
<keyword id="KW-0687">Ribonucleoprotein</keyword>
<keyword id="KW-0689">Ribosomal protein</keyword>
<dbReference type="EMBL" id="D10578">
    <property type="protein sequence ID" value="BAA01435.1"/>
    <property type="molecule type" value="Genomic_DNA"/>
</dbReference>
<dbReference type="EMBL" id="X92517">
    <property type="protein sequence ID" value="CAA63277.1"/>
    <property type="molecule type" value="Genomic_DNA"/>
</dbReference>
<dbReference type="EMBL" id="Z71438">
    <property type="protein sequence ID" value="CAA96049.1"/>
    <property type="status" value="ALT_SEQ"/>
    <property type="molecule type" value="Genomic_DNA"/>
</dbReference>
<dbReference type="EMBL" id="BK006947">
    <property type="protein sequence ID" value="DAA10387.1"/>
    <property type="molecule type" value="Genomic_DNA"/>
</dbReference>
<dbReference type="PIR" id="S63114">
    <property type="entry name" value="S63114"/>
</dbReference>
<dbReference type="RefSeq" id="NP_014237.2">
    <property type="nucleotide sequence ID" value="NM_001183000.1"/>
</dbReference>
<dbReference type="PDB" id="3J6X">
    <property type="method" value="EM"/>
    <property type="resolution" value="6.10 A"/>
    <property type="chains" value="82=1-106"/>
</dbReference>
<dbReference type="PDB" id="3J6Y">
    <property type="method" value="EM"/>
    <property type="resolution" value="6.10 A"/>
    <property type="chains" value="82=1-106"/>
</dbReference>
<dbReference type="PDB" id="3J77">
    <property type="method" value="EM"/>
    <property type="resolution" value="6.20 A"/>
    <property type="chains" value="92=1-106"/>
</dbReference>
<dbReference type="PDB" id="3J78">
    <property type="method" value="EM"/>
    <property type="resolution" value="6.30 A"/>
    <property type="chains" value="92=1-106"/>
</dbReference>
<dbReference type="PDB" id="4U3M">
    <property type="method" value="X-ray"/>
    <property type="resolution" value="3.00 A"/>
    <property type="chains" value="Q2/q2=2-106"/>
</dbReference>
<dbReference type="PDB" id="4U3N">
    <property type="method" value="X-ray"/>
    <property type="resolution" value="3.20 A"/>
    <property type="chains" value="Q2/q2=2-106"/>
</dbReference>
<dbReference type="PDB" id="4U3U">
    <property type="method" value="X-ray"/>
    <property type="resolution" value="2.90 A"/>
    <property type="chains" value="Q2/q2=2-106"/>
</dbReference>
<dbReference type="PDB" id="4U4N">
    <property type="method" value="X-ray"/>
    <property type="resolution" value="3.10 A"/>
    <property type="chains" value="Q2/q2=2-106"/>
</dbReference>
<dbReference type="PDB" id="4U4O">
    <property type="method" value="X-ray"/>
    <property type="resolution" value="3.60 A"/>
    <property type="chains" value="Q2/q2=2-106"/>
</dbReference>
<dbReference type="PDB" id="4U4Q">
    <property type="method" value="X-ray"/>
    <property type="resolution" value="3.00 A"/>
    <property type="chains" value="Q2/q2=2-106"/>
</dbReference>
<dbReference type="PDB" id="4U4R">
    <property type="method" value="X-ray"/>
    <property type="resolution" value="2.80 A"/>
    <property type="chains" value="Q2/q2=2-106"/>
</dbReference>
<dbReference type="PDB" id="4U4U">
    <property type="method" value="X-ray"/>
    <property type="resolution" value="3.00 A"/>
    <property type="chains" value="Q2/q2=2-106"/>
</dbReference>
<dbReference type="PDB" id="4U4Y">
    <property type="method" value="X-ray"/>
    <property type="resolution" value="3.20 A"/>
    <property type="chains" value="Q2/q2=2-106"/>
</dbReference>
<dbReference type="PDB" id="4U4Z">
    <property type="method" value="X-ray"/>
    <property type="resolution" value="3.10 A"/>
    <property type="chains" value="Q2/q2=2-106"/>
</dbReference>
<dbReference type="PDB" id="4U50">
    <property type="method" value="X-ray"/>
    <property type="resolution" value="3.20 A"/>
    <property type="chains" value="Q2/q2=2-106"/>
</dbReference>
<dbReference type="PDB" id="4U51">
    <property type="method" value="X-ray"/>
    <property type="resolution" value="3.20 A"/>
    <property type="chains" value="Q2/q2=2-106"/>
</dbReference>
<dbReference type="PDB" id="4U52">
    <property type="method" value="X-ray"/>
    <property type="resolution" value="3.00 A"/>
    <property type="chains" value="Q2/q2=2-106"/>
</dbReference>
<dbReference type="PDB" id="4U53">
    <property type="method" value="X-ray"/>
    <property type="resolution" value="3.30 A"/>
    <property type="chains" value="Q2/q2=2-106"/>
</dbReference>
<dbReference type="PDB" id="4U55">
    <property type="method" value="X-ray"/>
    <property type="resolution" value="3.20 A"/>
    <property type="chains" value="Q2/q2=2-106"/>
</dbReference>
<dbReference type="PDB" id="4U56">
    <property type="method" value="X-ray"/>
    <property type="resolution" value="3.45 A"/>
    <property type="chains" value="Q2/q2=2-106"/>
</dbReference>
<dbReference type="PDB" id="4U6F">
    <property type="method" value="X-ray"/>
    <property type="resolution" value="3.10 A"/>
    <property type="chains" value="Q2/q2=2-106"/>
</dbReference>
<dbReference type="PDB" id="4V4B">
    <property type="method" value="EM"/>
    <property type="resolution" value="11.70 A"/>
    <property type="chains" value="BZ=2-106"/>
</dbReference>
<dbReference type="PDB" id="4V5Z">
    <property type="method" value="EM"/>
    <property type="resolution" value="8.70 A"/>
    <property type="chains" value="B4=1-106"/>
</dbReference>
<dbReference type="PDB" id="4V6I">
    <property type="method" value="EM"/>
    <property type="resolution" value="8.80 A"/>
    <property type="chains" value="Br=1-106"/>
</dbReference>
<dbReference type="PDB" id="4V7R">
    <property type="method" value="X-ray"/>
    <property type="resolution" value="4.00 A"/>
    <property type="chains" value="Bf/Df=1-106"/>
</dbReference>
<dbReference type="PDB" id="4V88">
    <property type="method" value="X-ray"/>
    <property type="resolution" value="3.00 A"/>
    <property type="chains" value="Bo/Do=1-106"/>
</dbReference>
<dbReference type="PDB" id="4V8T">
    <property type="method" value="EM"/>
    <property type="resolution" value="8.10 A"/>
    <property type="chains" value="o=1-106"/>
</dbReference>
<dbReference type="PDB" id="4V8Y">
    <property type="method" value="EM"/>
    <property type="resolution" value="4.30 A"/>
    <property type="chains" value="Bo=2-106"/>
</dbReference>
<dbReference type="PDB" id="4V8Z">
    <property type="method" value="EM"/>
    <property type="resolution" value="6.60 A"/>
    <property type="chains" value="Bo=2-106"/>
</dbReference>
<dbReference type="PDB" id="4V91">
    <property type="method" value="EM"/>
    <property type="resolution" value="3.70 A"/>
    <property type="chains" value="o=1-106"/>
</dbReference>
<dbReference type="PDB" id="5APN">
    <property type="method" value="EM"/>
    <property type="resolution" value="3.91 A"/>
    <property type="chains" value="o=1-106"/>
</dbReference>
<dbReference type="PDB" id="5APO">
    <property type="method" value="EM"/>
    <property type="resolution" value="3.41 A"/>
    <property type="chains" value="o=1-106"/>
</dbReference>
<dbReference type="PDB" id="5DAT">
    <property type="method" value="X-ray"/>
    <property type="resolution" value="3.15 A"/>
    <property type="chains" value="Q2/q2=2-106"/>
</dbReference>
<dbReference type="PDB" id="5DC3">
    <property type="method" value="X-ray"/>
    <property type="resolution" value="3.25 A"/>
    <property type="chains" value="Q2/q2=2-106"/>
</dbReference>
<dbReference type="PDB" id="5DGE">
    <property type="method" value="X-ray"/>
    <property type="resolution" value="3.45 A"/>
    <property type="chains" value="Q2/q2=2-106"/>
</dbReference>
<dbReference type="PDB" id="5DGF">
    <property type="method" value="X-ray"/>
    <property type="resolution" value="3.30 A"/>
    <property type="chains" value="Q2/q2=2-106"/>
</dbReference>
<dbReference type="PDB" id="5DGV">
    <property type="method" value="X-ray"/>
    <property type="resolution" value="3.10 A"/>
    <property type="chains" value="Q2/q2=2-106"/>
</dbReference>
<dbReference type="PDB" id="5FCI">
    <property type="method" value="X-ray"/>
    <property type="resolution" value="3.40 A"/>
    <property type="chains" value="Q2/q2=2-106"/>
</dbReference>
<dbReference type="PDB" id="5FCJ">
    <property type="method" value="X-ray"/>
    <property type="resolution" value="3.10 A"/>
    <property type="chains" value="Q2/q2=2-106"/>
</dbReference>
<dbReference type="PDB" id="5GAK">
    <property type="method" value="EM"/>
    <property type="resolution" value="3.88 A"/>
    <property type="chains" value="C=1-106"/>
</dbReference>
<dbReference type="PDB" id="5H4P">
    <property type="method" value="EM"/>
    <property type="resolution" value="3.07 A"/>
    <property type="chains" value="o=1-106"/>
</dbReference>
<dbReference type="PDB" id="5I4L">
    <property type="method" value="X-ray"/>
    <property type="resolution" value="3.10 A"/>
    <property type="chains" value="Q2/q2=2-106"/>
</dbReference>
<dbReference type="PDB" id="5JUO">
    <property type="method" value="EM"/>
    <property type="resolution" value="4.00 A"/>
    <property type="chains" value="TA=1-106"/>
</dbReference>
<dbReference type="PDB" id="5JUP">
    <property type="method" value="EM"/>
    <property type="resolution" value="3.50 A"/>
    <property type="chains" value="TA=1-106"/>
</dbReference>
<dbReference type="PDB" id="5JUS">
    <property type="method" value="EM"/>
    <property type="resolution" value="4.20 A"/>
    <property type="chains" value="TA=1-106"/>
</dbReference>
<dbReference type="PDB" id="5JUT">
    <property type="method" value="EM"/>
    <property type="resolution" value="4.00 A"/>
    <property type="chains" value="TA=1-106"/>
</dbReference>
<dbReference type="PDB" id="5JUU">
    <property type="method" value="EM"/>
    <property type="resolution" value="4.00 A"/>
    <property type="chains" value="TA=1-106"/>
</dbReference>
<dbReference type="PDB" id="5LYB">
    <property type="method" value="X-ray"/>
    <property type="resolution" value="3.25 A"/>
    <property type="chains" value="Q2/q2=2-106"/>
</dbReference>
<dbReference type="PDB" id="5MC6">
    <property type="method" value="EM"/>
    <property type="resolution" value="3.80 A"/>
    <property type="chains" value="AP=1-106"/>
</dbReference>
<dbReference type="PDB" id="5MEI">
    <property type="method" value="X-ray"/>
    <property type="resolution" value="3.50 A"/>
    <property type="chains" value="AP/DQ=2-106"/>
</dbReference>
<dbReference type="PDB" id="5NDG">
    <property type="method" value="X-ray"/>
    <property type="resolution" value="3.70 A"/>
    <property type="chains" value="Q2/q2=2-106"/>
</dbReference>
<dbReference type="PDB" id="5NDV">
    <property type="method" value="X-ray"/>
    <property type="resolution" value="3.30 A"/>
    <property type="chains" value="Q2/q2=2-106"/>
</dbReference>
<dbReference type="PDB" id="5NDW">
    <property type="method" value="X-ray"/>
    <property type="resolution" value="3.70 A"/>
    <property type="chains" value="Q2/q2=2-106"/>
</dbReference>
<dbReference type="PDB" id="5OBM">
    <property type="method" value="X-ray"/>
    <property type="resolution" value="3.40 A"/>
    <property type="chains" value="Q2/q2=2-106"/>
</dbReference>
<dbReference type="PDB" id="5ON6">
    <property type="method" value="X-ray"/>
    <property type="resolution" value="3.10 A"/>
    <property type="chains" value="AP/DQ=2-106"/>
</dbReference>
<dbReference type="PDB" id="5T62">
    <property type="method" value="EM"/>
    <property type="resolution" value="3.30 A"/>
    <property type="chains" value="Q=1-106"/>
</dbReference>
<dbReference type="PDB" id="5T6R">
    <property type="method" value="EM"/>
    <property type="resolution" value="4.50 A"/>
    <property type="chains" value="Q=1-106"/>
</dbReference>
<dbReference type="PDB" id="5TBW">
    <property type="method" value="X-ray"/>
    <property type="resolution" value="3.00 A"/>
    <property type="chains" value="AP/DQ=2-106"/>
</dbReference>
<dbReference type="PDB" id="5TGA">
    <property type="method" value="X-ray"/>
    <property type="resolution" value="3.30 A"/>
    <property type="chains" value="Q2/q2=2-106"/>
</dbReference>
<dbReference type="PDB" id="5TGM">
    <property type="method" value="X-ray"/>
    <property type="resolution" value="3.50 A"/>
    <property type="chains" value="Q2/q2=2-106"/>
</dbReference>
<dbReference type="PDB" id="6GQ1">
    <property type="method" value="EM"/>
    <property type="resolution" value="4.40 A"/>
    <property type="chains" value="o=2-106"/>
</dbReference>
<dbReference type="PDB" id="6GQB">
    <property type="method" value="EM"/>
    <property type="resolution" value="3.90 A"/>
    <property type="chains" value="o=2-106"/>
</dbReference>
<dbReference type="PDB" id="6GQV">
    <property type="method" value="EM"/>
    <property type="resolution" value="4.00 A"/>
    <property type="chains" value="o=2-106"/>
</dbReference>
<dbReference type="PDB" id="6HD7">
    <property type="method" value="EM"/>
    <property type="resolution" value="3.40 A"/>
    <property type="chains" value="C=1-106"/>
</dbReference>
<dbReference type="PDB" id="6HHQ">
    <property type="method" value="X-ray"/>
    <property type="resolution" value="3.10 A"/>
    <property type="chains" value="AP/DQ=1-106"/>
</dbReference>
<dbReference type="PDB" id="6I7O">
    <property type="method" value="EM"/>
    <property type="resolution" value="5.30 A"/>
    <property type="chains" value="AP/XP=2-106"/>
</dbReference>
<dbReference type="PDB" id="6N8J">
    <property type="method" value="EM"/>
    <property type="resolution" value="3.50 A"/>
    <property type="chains" value="q=1-106"/>
</dbReference>
<dbReference type="PDB" id="6N8K">
    <property type="method" value="EM"/>
    <property type="resolution" value="3.60 A"/>
    <property type="chains" value="q=1-106"/>
</dbReference>
<dbReference type="PDB" id="6N8L">
    <property type="method" value="EM"/>
    <property type="resolution" value="3.60 A"/>
    <property type="chains" value="q=1-106"/>
</dbReference>
<dbReference type="PDB" id="6N8M">
    <property type="method" value="EM"/>
    <property type="resolution" value="3.50 A"/>
    <property type="chains" value="Q=1-106"/>
</dbReference>
<dbReference type="PDB" id="6N8N">
    <property type="method" value="EM"/>
    <property type="resolution" value="3.80 A"/>
    <property type="chains" value="Q=1-106"/>
</dbReference>
<dbReference type="PDB" id="6N8O">
    <property type="method" value="EM"/>
    <property type="resolution" value="3.50 A"/>
    <property type="chains" value="Q=1-106"/>
</dbReference>
<dbReference type="PDB" id="6OIG">
    <property type="method" value="EM"/>
    <property type="resolution" value="3.80 A"/>
    <property type="chains" value="o=2-106"/>
</dbReference>
<dbReference type="PDB" id="6Q8Y">
    <property type="method" value="EM"/>
    <property type="resolution" value="3.10 A"/>
    <property type="chains" value="AP=2-106"/>
</dbReference>
<dbReference type="PDB" id="6QIK">
    <property type="method" value="EM"/>
    <property type="resolution" value="3.10 A"/>
    <property type="chains" value="l=1-106"/>
</dbReference>
<dbReference type="PDB" id="6QT0">
    <property type="method" value="EM"/>
    <property type="resolution" value="3.40 A"/>
    <property type="chains" value="l=1-106"/>
</dbReference>
<dbReference type="PDB" id="6QTZ">
    <property type="method" value="EM"/>
    <property type="resolution" value="3.50 A"/>
    <property type="chains" value="l=1-106"/>
</dbReference>
<dbReference type="PDB" id="6R84">
    <property type="method" value="EM"/>
    <property type="resolution" value="3.60 A"/>
    <property type="chains" value="C=2-106"/>
</dbReference>
<dbReference type="PDB" id="6R86">
    <property type="method" value="EM"/>
    <property type="resolution" value="3.40 A"/>
    <property type="chains" value="C=2-106"/>
</dbReference>
<dbReference type="PDB" id="6R87">
    <property type="method" value="EM"/>
    <property type="resolution" value="3.40 A"/>
    <property type="chains" value="C=2-106"/>
</dbReference>
<dbReference type="PDB" id="6RI5">
    <property type="method" value="EM"/>
    <property type="resolution" value="3.30 A"/>
    <property type="chains" value="l=1-106"/>
</dbReference>
<dbReference type="PDB" id="6RZZ">
    <property type="method" value="EM"/>
    <property type="resolution" value="3.20 A"/>
    <property type="chains" value="l=1-106"/>
</dbReference>
<dbReference type="PDB" id="6S05">
    <property type="method" value="EM"/>
    <property type="resolution" value="3.90 A"/>
    <property type="chains" value="l=1-106"/>
</dbReference>
<dbReference type="PDB" id="6S47">
    <property type="method" value="EM"/>
    <property type="resolution" value="3.28 A"/>
    <property type="chains" value="Aq=2-106"/>
</dbReference>
<dbReference type="PDB" id="6SNT">
    <property type="method" value="EM"/>
    <property type="resolution" value="2.80 A"/>
    <property type="chains" value="ab=1-106"/>
</dbReference>
<dbReference type="PDB" id="6SV4">
    <property type="method" value="EM"/>
    <property type="resolution" value="3.30 A"/>
    <property type="chains" value="AP/XP/zP=1-106"/>
</dbReference>
<dbReference type="PDB" id="6T4Q">
    <property type="method" value="EM"/>
    <property type="resolution" value="2.60 A"/>
    <property type="chains" value="Lo=2-104"/>
</dbReference>
<dbReference type="PDB" id="6T7I">
    <property type="method" value="EM"/>
    <property type="resolution" value="3.20 A"/>
    <property type="chains" value="Lo=1-106"/>
</dbReference>
<dbReference type="PDB" id="6T7T">
    <property type="method" value="EM"/>
    <property type="resolution" value="3.10 A"/>
    <property type="chains" value="Lo=1-106"/>
</dbReference>
<dbReference type="PDB" id="6T83">
    <property type="method" value="EM"/>
    <property type="resolution" value="4.00 A"/>
    <property type="chains" value="Z/ob=1-106"/>
</dbReference>
<dbReference type="PDB" id="6TB3">
    <property type="method" value="EM"/>
    <property type="resolution" value="2.80 A"/>
    <property type="chains" value="AP=2-104"/>
</dbReference>
<dbReference type="PDB" id="6TNU">
    <property type="method" value="EM"/>
    <property type="resolution" value="3.10 A"/>
    <property type="chains" value="AP=2-104"/>
</dbReference>
<dbReference type="PDB" id="6WOO">
    <property type="method" value="EM"/>
    <property type="resolution" value="2.90 A"/>
    <property type="chains" value="o=2-102"/>
</dbReference>
<dbReference type="PDB" id="6XIQ">
    <property type="method" value="EM"/>
    <property type="resolution" value="4.20 A"/>
    <property type="chains" value="o=1-106"/>
</dbReference>
<dbReference type="PDB" id="6XIR">
    <property type="method" value="EM"/>
    <property type="resolution" value="3.20 A"/>
    <property type="chains" value="o=1-106"/>
</dbReference>
<dbReference type="PDB" id="6Z6J">
    <property type="method" value="EM"/>
    <property type="resolution" value="3.40 A"/>
    <property type="chains" value="Lo=1-106"/>
</dbReference>
<dbReference type="PDB" id="6Z6K">
    <property type="method" value="EM"/>
    <property type="resolution" value="3.40 A"/>
    <property type="chains" value="Lo=1-106"/>
</dbReference>
<dbReference type="PDB" id="7AZY">
    <property type="method" value="EM"/>
    <property type="resolution" value="2.88 A"/>
    <property type="chains" value="Q=1-106"/>
</dbReference>
<dbReference type="PDB" id="7B7D">
    <property type="method" value="EM"/>
    <property type="resolution" value="3.30 A"/>
    <property type="chains" value="Lk=2-104"/>
</dbReference>
<dbReference type="PDB" id="7MPI">
    <property type="method" value="EM"/>
    <property type="resolution" value="3.05 A"/>
    <property type="chains" value="Ao=2-106"/>
</dbReference>
<dbReference type="PDB" id="7MPJ">
    <property type="method" value="EM"/>
    <property type="resolution" value="2.70 A"/>
    <property type="chains" value="Ao=2-106"/>
</dbReference>
<dbReference type="PDB" id="7N8B">
    <property type="method" value="EM"/>
    <property type="resolution" value="3.05 A"/>
    <property type="chains" value="Ao=2-106"/>
</dbReference>
<dbReference type="PDB" id="7NRC">
    <property type="method" value="EM"/>
    <property type="resolution" value="3.90 A"/>
    <property type="chains" value="Lq=2-104"/>
</dbReference>
<dbReference type="PDB" id="7NRD">
    <property type="method" value="EM"/>
    <property type="resolution" value="4.36 A"/>
    <property type="chains" value="Lq=2-104"/>
</dbReference>
<dbReference type="PDB" id="7TOO">
    <property type="method" value="EM"/>
    <property type="resolution" value="2.70 A"/>
    <property type="chains" value="AL42=1-106"/>
</dbReference>
<dbReference type="PDB" id="7TOP">
    <property type="method" value="EM"/>
    <property type="resolution" value="2.40 A"/>
    <property type="chains" value="AL42=1-106"/>
</dbReference>
<dbReference type="PDB" id="7Z34">
    <property type="method" value="EM"/>
    <property type="resolution" value="3.80 A"/>
    <property type="chains" value="q=1-106"/>
</dbReference>
<dbReference type="PDB" id="7ZPQ">
    <property type="method" value="EM"/>
    <property type="resolution" value="3.47 A"/>
    <property type="chains" value="Bn=2-104"/>
</dbReference>
<dbReference type="PDB" id="7ZRS">
    <property type="method" value="EM"/>
    <property type="resolution" value="4.80 A"/>
    <property type="chains" value="Bn=2-104"/>
</dbReference>
<dbReference type="PDB" id="7ZS5">
    <property type="method" value="EM"/>
    <property type="resolution" value="3.20 A"/>
    <property type="chains" value="BA=2-106"/>
</dbReference>
<dbReference type="PDB" id="7ZUW">
    <property type="method" value="EM"/>
    <property type="resolution" value="4.30 A"/>
    <property type="chains" value="Bn=2-104"/>
</dbReference>
<dbReference type="PDB" id="7ZUX">
    <property type="method" value="EM"/>
    <property type="resolution" value="2.50 A"/>
    <property type="chains" value="En=2-104"/>
</dbReference>
<dbReference type="PDB" id="7ZW0">
    <property type="method" value="EM"/>
    <property type="resolution" value="2.40 A"/>
    <property type="chains" value="Lr=1-106"/>
</dbReference>
<dbReference type="PDB" id="8AAF">
    <property type="method" value="EM"/>
    <property type="resolution" value="2.50 A"/>
    <property type="chains" value="b=1-106"/>
</dbReference>
<dbReference type="PDB" id="8AGT">
    <property type="method" value="EM"/>
    <property type="resolution" value="2.60 A"/>
    <property type="chains" value="b=1-106"/>
</dbReference>
<dbReference type="PDB" id="8AGU">
    <property type="method" value="EM"/>
    <property type="resolution" value="2.70 A"/>
    <property type="chains" value="b=1-106"/>
</dbReference>
<dbReference type="PDB" id="8AGV">
    <property type="method" value="EM"/>
    <property type="resolution" value="2.60 A"/>
    <property type="chains" value="b=1-106"/>
</dbReference>
<dbReference type="PDB" id="8AGW">
    <property type="method" value="EM"/>
    <property type="resolution" value="2.60 A"/>
    <property type="chains" value="b=1-106"/>
</dbReference>
<dbReference type="PDB" id="8AGX">
    <property type="method" value="EM"/>
    <property type="resolution" value="2.40 A"/>
    <property type="chains" value="b=1-106"/>
</dbReference>
<dbReference type="PDB" id="8AGZ">
    <property type="method" value="EM"/>
    <property type="resolution" value="2.60 A"/>
    <property type="chains" value="b=1-106"/>
</dbReference>
<dbReference type="PDB" id="8BIP">
    <property type="method" value="EM"/>
    <property type="resolution" value="3.10 A"/>
    <property type="chains" value="Lo=2-104"/>
</dbReference>
<dbReference type="PDB" id="8BJQ">
    <property type="method" value="EM"/>
    <property type="resolution" value="3.80 A"/>
    <property type="chains" value="Lo=2-104"/>
</dbReference>
<dbReference type="PDB" id="8BN3">
    <property type="method" value="EM"/>
    <property type="resolution" value="2.40 A"/>
    <property type="chains" value="Q2=2-106"/>
</dbReference>
<dbReference type="PDB" id="8BQD">
    <property type="method" value="EM"/>
    <property type="resolution" value="3.90 A"/>
    <property type="chains" value="AP=2-104"/>
</dbReference>
<dbReference type="PDB" id="8BQX">
    <property type="method" value="EM"/>
    <property type="resolution" value="3.80 A"/>
    <property type="chains" value="AP=2-104"/>
</dbReference>
<dbReference type="PDB" id="8CCS">
    <property type="method" value="EM"/>
    <property type="resolution" value="1.97 A"/>
    <property type="chains" value="a=1-106"/>
</dbReference>
<dbReference type="PDB" id="8CDL">
    <property type="method" value="EM"/>
    <property type="resolution" value="2.72 A"/>
    <property type="chains" value="a=1-106"/>
</dbReference>
<dbReference type="PDB" id="8CDR">
    <property type="method" value="EM"/>
    <property type="resolution" value="2.04 A"/>
    <property type="chains" value="a=1-106"/>
</dbReference>
<dbReference type="PDB" id="8CEH">
    <property type="method" value="EM"/>
    <property type="resolution" value="2.05 A"/>
    <property type="chains" value="a=1-106"/>
</dbReference>
<dbReference type="PDB" id="8CF5">
    <property type="method" value="EM"/>
    <property type="resolution" value="2.71 A"/>
    <property type="chains" value="a=1-106"/>
</dbReference>
<dbReference type="PDB" id="8CG8">
    <property type="method" value="EM"/>
    <property type="resolution" value="2.57 A"/>
    <property type="chains" value="a=1-106"/>
</dbReference>
<dbReference type="PDB" id="8CGN">
    <property type="method" value="EM"/>
    <property type="resolution" value="2.28 A"/>
    <property type="chains" value="a=1-106"/>
</dbReference>
<dbReference type="PDB" id="8CIV">
    <property type="method" value="EM"/>
    <property type="resolution" value="2.47 A"/>
    <property type="chains" value="a=1-106"/>
</dbReference>
<dbReference type="PDB" id="8CKU">
    <property type="method" value="EM"/>
    <property type="resolution" value="3.11 A"/>
    <property type="chains" value="a=1-106"/>
</dbReference>
<dbReference type="PDB" id="8CMJ">
    <property type="method" value="EM"/>
    <property type="resolution" value="3.79 A"/>
    <property type="chains" value="a=1-106"/>
</dbReference>
<dbReference type="PDB" id="8EUB">
    <property type="method" value="EM"/>
    <property type="resolution" value="2.52 A"/>
    <property type="chains" value="Ao=1-106"/>
</dbReference>
<dbReference type="PDB" id="8EVP">
    <property type="method" value="EM"/>
    <property type="resolution" value="2.38 A"/>
    <property type="chains" value="Ao=1-106"/>
</dbReference>
<dbReference type="PDB" id="8EVQ">
    <property type="method" value="EM"/>
    <property type="resolution" value="2.72 A"/>
    <property type="chains" value="Ao=1-106"/>
</dbReference>
<dbReference type="PDB" id="8EVR">
    <property type="method" value="EM"/>
    <property type="resolution" value="2.87 A"/>
    <property type="chains" value="Ao=1-106"/>
</dbReference>
<dbReference type="PDB" id="8EVS">
    <property type="method" value="EM"/>
    <property type="resolution" value="2.62 A"/>
    <property type="chains" value="Ao=1-106"/>
</dbReference>
<dbReference type="PDB" id="8EVT">
    <property type="method" value="EM"/>
    <property type="resolution" value="2.20 A"/>
    <property type="chains" value="Ao=1-106"/>
</dbReference>
<dbReference type="PDB" id="8EWB">
    <property type="method" value="EM"/>
    <property type="resolution" value="2.87 A"/>
    <property type="chains" value="Ao=1-106"/>
</dbReference>
<dbReference type="PDB" id="8EWC">
    <property type="method" value="EM"/>
    <property type="resolution" value="2.45 A"/>
    <property type="chains" value="Ao=1-106"/>
</dbReference>
<dbReference type="PDB" id="8HFR">
    <property type="method" value="EM"/>
    <property type="resolution" value="2.64 A"/>
    <property type="chains" value="mS=1-106"/>
</dbReference>
<dbReference type="PDB" id="8K2D">
    <property type="method" value="EM"/>
    <property type="resolution" value="3.20 A"/>
    <property type="chains" value="Lo=1-106"/>
</dbReference>
<dbReference type="PDB" id="8K82">
    <property type="method" value="EM"/>
    <property type="resolution" value="3.00 A"/>
    <property type="chains" value="Lo=1-106"/>
</dbReference>
<dbReference type="PDB" id="8P4V">
    <property type="method" value="X-ray"/>
    <property type="resolution" value="3.16 A"/>
    <property type="chains" value="AP/DQ=1-106"/>
</dbReference>
<dbReference type="PDB" id="8P8M">
    <property type="method" value="EM"/>
    <property type="resolution" value="2.66 A"/>
    <property type="chains" value="RQ=1-106"/>
</dbReference>
<dbReference type="PDB" id="8P8N">
    <property type="method" value="EM"/>
    <property type="resolution" value="2.15 A"/>
    <property type="chains" value="RQ=1-106"/>
</dbReference>
<dbReference type="PDB" id="8P8U">
    <property type="method" value="EM"/>
    <property type="resolution" value="2.23 A"/>
    <property type="chains" value="RQ=1-106"/>
</dbReference>
<dbReference type="PDB" id="8P9A">
    <property type="method" value="X-ray"/>
    <property type="resolution" value="2.90 A"/>
    <property type="chains" value="AP/DQ=1-106"/>
</dbReference>
<dbReference type="PDB" id="8PFR">
    <property type="method" value="EM"/>
    <property type="resolution" value="2.15 A"/>
    <property type="chains" value="RQ=1-106"/>
</dbReference>
<dbReference type="PDB" id="8T2X">
    <property type="method" value="EM"/>
    <property type="resolution" value="2.46 A"/>
    <property type="chains" value="Ao=1-106"/>
</dbReference>
<dbReference type="PDB" id="8T2Y">
    <property type="method" value="EM"/>
    <property type="resolution" value="2.20 A"/>
    <property type="chains" value="Ao=1-106"/>
</dbReference>
<dbReference type="PDB" id="8T2Z">
    <property type="method" value="EM"/>
    <property type="resolution" value="2.40 A"/>
    <property type="chains" value="Ao=1-106"/>
</dbReference>
<dbReference type="PDB" id="8T30">
    <property type="method" value="EM"/>
    <property type="resolution" value="2.88 A"/>
    <property type="chains" value="Ao=1-106"/>
</dbReference>
<dbReference type="PDB" id="8T3A">
    <property type="method" value="EM"/>
    <property type="resolution" value="2.86 A"/>
    <property type="chains" value="Ao=1-106"/>
</dbReference>
<dbReference type="PDB" id="8T3B">
    <property type="method" value="EM"/>
    <property type="resolution" value="3.08 A"/>
    <property type="chains" value="Ao=1-106"/>
</dbReference>
<dbReference type="PDB" id="8T3C">
    <property type="method" value="EM"/>
    <property type="resolution" value="3.86 A"/>
    <property type="chains" value="Ao=1-106"/>
</dbReference>
<dbReference type="PDB" id="8T3D">
    <property type="method" value="EM"/>
    <property type="resolution" value="2.95 A"/>
    <property type="chains" value="Ao=1-106"/>
</dbReference>
<dbReference type="PDB" id="8T3E">
    <property type="method" value="EM"/>
    <property type="resolution" value="3.04 A"/>
    <property type="chains" value="Ao=1-106"/>
</dbReference>
<dbReference type="PDB" id="8T3F">
    <property type="method" value="EM"/>
    <property type="resolution" value="3.09 A"/>
    <property type="chains" value="Ao=1-106"/>
</dbReference>
<dbReference type="PDB" id="8UT0">
    <property type="method" value="EM"/>
    <property type="resolution" value="3.22 A"/>
    <property type="chains" value="Lq=2-104"/>
</dbReference>
<dbReference type="PDB" id="8UTI">
    <property type="method" value="EM"/>
    <property type="resolution" value="3.13 A"/>
    <property type="chains" value="Lq=2-104"/>
</dbReference>
<dbReference type="PDB" id="8XU8">
    <property type="method" value="EM"/>
    <property type="resolution" value="3.40 A"/>
    <property type="chains" value="q=2-104"/>
</dbReference>
<dbReference type="PDB" id="8Y0U">
    <property type="method" value="EM"/>
    <property type="resolution" value="3.59 A"/>
    <property type="chains" value="Lo=1-106"/>
</dbReference>
<dbReference type="PDB" id="8YLD">
    <property type="method" value="EM"/>
    <property type="resolution" value="3.90 A"/>
    <property type="chains" value="q=2-104"/>
</dbReference>
<dbReference type="PDB" id="8YLR">
    <property type="method" value="EM"/>
    <property type="resolution" value="3.90 A"/>
    <property type="chains" value="q=2-104"/>
</dbReference>
<dbReference type="PDB" id="8Z70">
    <property type="method" value="EM"/>
    <property type="resolution" value="3.20 A"/>
    <property type="chains" value="q=2-104"/>
</dbReference>
<dbReference type="PDB" id="8Z71">
    <property type="method" value="EM"/>
    <property type="resolution" value="3.60 A"/>
    <property type="chains" value="q=2-104"/>
</dbReference>
<dbReference type="PDB" id="9F9S">
    <property type="method" value="EM"/>
    <property type="resolution" value="2.90 A"/>
    <property type="chains" value="Lc/Mc=1-106"/>
</dbReference>
<dbReference type="PDBsum" id="3J6X"/>
<dbReference type="PDBsum" id="3J6Y"/>
<dbReference type="PDBsum" id="3J77"/>
<dbReference type="PDBsum" id="3J78"/>
<dbReference type="PDBsum" id="4U3M"/>
<dbReference type="PDBsum" id="4U3N"/>
<dbReference type="PDBsum" id="4U3U"/>
<dbReference type="PDBsum" id="4U4N"/>
<dbReference type="PDBsum" id="4U4O"/>
<dbReference type="PDBsum" id="4U4Q"/>
<dbReference type="PDBsum" id="4U4R"/>
<dbReference type="PDBsum" id="4U4U"/>
<dbReference type="PDBsum" id="4U4Y"/>
<dbReference type="PDBsum" id="4U4Z"/>
<dbReference type="PDBsum" id="4U50"/>
<dbReference type="PDBsum" id="4U51"/>
<dbReference type="PDBsum" id="4U52"/>
<dbReference type="PDBsum" id="4U53"/>
<dbReference type="PDBsum" id="4U55"/>
<dbReference type="PDBsum" id="4U56"/>
<dbReference type="PDBsum" id="4U6F"/>
<dbReference type="PDBsum" id="4V4B"/>
<dbReference type="PDBsum" id="4V5Z"/>
<dbReference type="PDBsum" id="4V6I"/>
<dbReference type="PDBsum" id="4V7R"/>
<dbReference type="PDBsum" id="4V88"/>
<dbReference type="PDBsum" id="4V8T"/>
<dbReference type="PDBsum" id="4V8Y"/>
<dbReference type="PDBsum" id="4V8Z"/>
<dbReference type="PDBsum" id="4V91"/>
<dbReference type="PDBsum" id="5APN"/>
<dbReference type="PDBsum" id="5APO"/>
<dbReference type="PDBsum" id="5DAT"/>
<dbReference type="PDBsum" id="5DC3"/>
<dbReference type="PDBsum" id="5DGE"/>
<dbReference type="PDBsum" id="5DGF"/>
<dbReference type="PDBsum" id="5DGV"/>
<dbReference type="PDBsum" id="5FCI"/>
<dbReference type="PDBsum" id="5FCJ"/>
<dbReference type="PDBsum" id="5GAK"/>
<dbReference type="PDBsum" id="5H4P"/>
<dbReference type="PDBsum" id="5I4L"/>
<dbReference type="PDBsum" id="5JUO"/>
<dbReference type="PDBsum" id="5JUP"/>
<dbReference type="PDBsum" id="5JUS"/>
<dbReference type="PDBsum" id="5JUT"/>
<dbReference type="PDBsum" id="5JUU"/>
<dbReference type="PDBsum" id="5LYB"/>
<dbReference type="PDBsum" id="5MC6"/>
<dbReference type="PDBsum" id="5MEI"/>
<dbReference type="PDBsum" id="5NDG"/>
<dbReference type="PDBsum" id="5NDV"/>
<dbReference type="PDBsum" id="5NDW"/>
<dbReference type="PDBsum" id="5OBM"/>
<dbReference type="PDBsum" id="5ON6"/>
<dbReference type="PDBsum" id="5T62"/>
<dbReference type="PDBsum" id="5T6R"/>
<dbReference type="PDBsum" id="5TBW"/>
<dbReference type="PDBsum" id="5TGA"/>
<dbReference type="PDBsum" id="5TGM"/>
<dbReference type="PDBsum" id="6GQ1"/>
<dbReference type="PDBsum" id="6GQB"/>
<dbReference type="PDBsum" id="6GQV"/>
<dbReference type="PDBsum" id="6HD7"/>
<dbReference type="PDBsum" id="6HHQ"/>
<dbReference type="PDBsum" id="6I7O"/>
<dbReference type="PDBsum" id="6N8J"/>
<dbReference type="PDBsum" id="6N8K"/>
<dbReference type="PDBsum" id="6N8L"/>
<dbReference type="PDBsum" id="6N8M"/>
<dbReference type="PDBsum" id="6N8N"/>
<dbReference type="PDBsum" id="6N8O"/>
<dbReference type="PDBsum" id="6OIG"/>
<dbReference type="PDBsum" id="6Q8Y"/>
<dbReference type="PDBsum" id="6QIK"/>
<dbReference type="PDBsum" id="6QT0"/>
<dbReference type="PDBsum" id="6QTZ"/>
<dbReference type="PDBsum" id="6R84"/>
<dbReference type="PDBsum" id="6R86"/>
<dbReference type="PDBsum" id="6R87"/>
<dbReference type="PDBsum" id="6RI5"/>
<dbReference type="PDBsum" id="6RZZ"/>
<dbReference type="PDBsum" id="6S05"/>
<dbReference type="PDBsum" id="6S47"/>
<dbReference type="PDBsum" id="6SNT"/>
<dbReference type="PDBsum" id="6SV4"/>
<dbReference type="PDBsum" id="6T4Q"/>
<dbReference type="PDBsum" id="6T7I"/>
<dbReference type="PDBsum" id="6T7T"/>
<dbReference type="PDBsum" id="6T83"/>
<dbReference type="PDBsum" id="6TB3"/>
<dbReference type="PDBsum" id="6TNU"/>
<dbReference type="PDBsum" id="6WOO"/>
<dbReference type="PDBsum" id="6XIQ"/>
<dbReference type="PDBsum" id="6XIR"/>
<dbReference type="PDBsum" id="6Z6J"/>
<dbReference type="PDBsum" id="6Z6K"/>
<dbReference type="PDBsum" id="7AZY"/>
<dbReference type="PDBsum" id="7B7D"/>
<dbReference type="PDBsum" id="7MPI"/>
<dbReference type="PDBsum" id="7MPJ"/>
<dbReference type="PDBsum" id="7N8B"/>
<dbReference type="PDBsum" id="7NRC"/>
<dbReference type="PDBsum" id="7NRD"/>
<dbReference type="PDBsum" id="7TOO"/>
<dbReference type="PDBsum" id="7TOP"/>
<dbReference type="PDBsum" id="7Z34"/>
<dbReference type="PDBsum" id="7ZPQ"/>
<dbReference type="PDBsum" id="7ZRS"/>
<dbReference type="PDBsum" id="7ZS5"/>
<dbReference type="PDBsum" id="7ZUW"/>
<dbReference type="PDBsum" id="7ZUX"/>
<dbReference type="PDBsum" id="7ZW0"/>
<dbReference type="PDBsum" id="8AAF"/>
<dbReference type="PDBsum" id="8AGT"/>
<dbReference type="PDBsum" id="8AGU"/>
<dbReference type="PDBsum" id="8AGV"/>
<dbReference type="PDBsum" id="8AGW"/>
<dbReference type="PDBsum" id="8AGX"/>
<dbReference type="PDBsum" id="8AGZ"/>
<dbReference type="PDBsum" id="8BIP"/>
<dbReference type="PDBsum" id="8BJQ"/>
<dbReference type="PDBsum" id="8BN3"/>
<dbReference type="PDBsum" id="8BQD"/>
<dbReference type="PDBsum" id="8BQX"/>
<dbReference type="PDBsum" id="8CCS"/>
<dbReference type="PDBsum" id="8CDL"/>
<dbReference type="PDBsum" id="8CDR"/>
<dbReference type="PDBsum" id="8CEH"/>
<dbReference type="PDBsum" id="8CF5"/>
<dbReference type="PDBsum" id="8CG8"/>
<dbReference type="PDBsum" id="8CGN"/>
<dbReference type="PDBsum" id="8CIV"/>
<dbReference type="PDBsum" id="8CKU"/>
<dbReference type="PDBsum" id="8CMJ"/>
<dbReference type="PDBsum" id="8EUB"/>
<dbReference type="PDBsum" id="8EVP"/>
<dbReference type="PDBsum" id="8EVQ"/>
<dbReference type="PDBsum" id="8EVR"/>
<dbReference type="PDBsum" id="8EVS"/>
<dbReference type="PDBsum" id="8EVT"/>
<dbReference type="PDBsum" id="8EWB"/>
<dbReference type="PDBsum" id="8EWC"/>
<dbReference type="PDBsum" id="8HFR"/>
<dbReference type="PDBsum" id="8K2D"/>
<dbReference type="PDBsum" id="8K82"/>
<dbReference type="PDBsum" id="8P4V"/>
<dbReference type="PDBsum" id="8P8M"/>
<dbReference type="PDBsum" id="8P8N"/>
<dbReference type="PDBsum" id="8P8U"/>
<dbReference type="PDBsum" id="8P9A"/>
<dbReference type="PDBsum" id="8PFR"/>
<dbReference type="PDBsum" id="8T2X"/>
<dbReference type="PDBsum" id="8T2Y"/>
<dbReference type="PDBsum" id="8T2Z"/>
<dbReference type="PDBsum" id="8T30"/>
<dbReference type="PDBsum" id="8T3A"/>
<dbReference type="PDBsum" id="8T3B"/>
<dbReference type="PDBsum" id="8T3C"/>
<dbReference type="PDBsum" id="8T3D"/>
<dbReference type="PDBsum" id="8T3E"/>
<dbReference type="PDBsum" id="8T3F"/>
<dbReference type="PDBsum" id="8UT0"/>
<dbReference type="PDBsum" id="8UTI"/>
<dbReference type="PDBsum" id="8XU8"/>
<dbReference type="PDBsum" id="8Y0U"/>
<dbReference type="PDBsum" id="8YLD"/>
<dbReference type="PDBsum" id="8YLR"/>
<dbReference type="PDBsum" id="8Z70"/>
<dbReference type="PDBsum" id="8Z71"/>
<dbReference type="PDBsum" id="9F9S"/>
<dbReference type="EMDB" id="EMD-0047"/>
<dbReference type="EMDB" id="EMD-0048"/>
<dbReference type="EMDB" id="EMD-0049"/>
<dbReference type="EMDB" id="EMD-0202"/>
<dbReference type="EMDB" id="EMD-0369"/>
<dbReference type="EMDB" id="EMD-0370"/>
<dbReference type="EMDB" id="EMD-0371"/>
<dbReference type="EMDB" id="EMD-0372"/>
<dbReference type="EMDB" id="EMD-0373"/>
<dbReference type="EMDB" id="EMD-0374"/>
<dbReference type="EMDB" id="EMD-10068"/>
<dbReference type="EMDB" id="EMD-10071"/>
<dbReference type="EMDB" id="EMD-10098"/>
<dbReference type="EMDB" id="EMD-10262"/>
<dbReference type="EMDB" id="EMD-10315"/>
<dbReference type="EMDB" id="EMD-10377"/>
<dbReference type="EMDB" id="EMD-10396"/>
<dbReference type="EMDB" id="EMD-10397"/>
<dbReference type="EMDB" id="EMD-10398"/>
<dbReference type="EMDB" id="EMD-10431"/>
<dbReference type="EMDB" id="EMD-10537"/>
<dbReference type="EMDB" id="EMD-11096"/>
<dbReference type="EMDB" id="EMD-11097"/>
<dbReference type="EMDB" id="EMD-11951"/>
<dbReference type="EMDB" id="EMD-12081"/>
<dbReference type="EMDB" id="EMD-12534"/>
<dbReference type="EMDB" id="EMD-12535"/>
<dbReference type="EMDB" id="EMD-14471"/>
<dbReference type="EMDB" id="EMD-14861"/>
<dbReference type="EMDB" id="EMD-14921"/>
<dbReference type="EMDB" id="EMD-14926"/>
<dbReference type="EMDB" id="EMD-14978"/>
<dbReference type="EMDB" id="EMD-14979"/>
<dbReference type="EMDB" id="EMD-14990"/>
<dbReference type="EMDB" id="EMD-15296"/>
<dbReference type="EMDB" id="EMD-15423"/>
<dbReference type="EMDB" id="EMD-15424"/>
<dbReference type="EMDB" id="EMD-15425"/>
<dbReference type="EMDB" id="EMD-15426"/>
<dbReference type="EMDB" id="EMD-15427"/>
<dbReference type="EMDB" id="EMD-15428"/>
<dbReference type="EMDB" id="EMD-16086"/>
<dbReference type="EMDB" id="EMD-16090"/>
<dbReference type="EMDB" id="EMD-16127"/>
<dbReference type="EMDB" id="EMD-16182"/>
<dbReference type="EMDB" id="EMD-16191"/>
<dbReference type="EMDB" id="EMD-16563"/>
<dbReference type="EMDB" id="EMD-16591"/>
<dbReference type="EMDB" id="EMD-16594"/>
<dbReference type="EMDB" id="EMD-16609"/>
<dbReference type="EMDB" id="EMD-16616"/>
<dbReference type="EMDB" id="EMD-16634"/>
<dbReference type="EMDB" id="EMD-16648"/>
<dbReference type="EMDB" id="EMD-16684"/>
<dbReference type="EMDB" id="EMD-16702"/>
<dbReference type="EMDB" id="EMD-16729"/>
<dbReference type="EMDB" id="EMD-17549"/>
<dbReference type="EMDB" id="EMD-17550"/>
<dbReference type="EMDB" id="EMD-17552"/>
<dbReference type="EMDB" id="EMD-17653"/>
<dbReference type="EMDB" id="EMD-20077"/>
<dbReference type="EMDB" id="EMD-21859"/>
<dbReference type="EMDB" id="EMD-22196"/>
<dbReference type="EMDB" id="EMD-22198"/>
<dbReference type="EMDB" id="EMD-23934"/>
<dbReference type="EMDB" id="EMD-23935"/>
<dbReference type="EMDB" id="EMD-24235"/>
<dbReference type="EMDB" id="EMD-26033"/>
<dbReference type="EMDB" id="EMD-26034"/>
<dbReference type="EMDB" id="EMD-28610"/>
<dbReference type="EMDB" id="EMD-28632"/>
<dbReference type="EMDB" id="EMD-28633"/>
<dbReference type="EMDB" id="EMD-28634"/>
<dbReference type="EMDB" id="EMD-28635"/>
<dbReference type="EMDB" id="EMD-28636"/>
<dbReference type="EMDB" id="EMD-28642"/>
<dbReference type="EMDB" id="EMD-28643"/>
<dbReference type="EMDB" id="EMD-3461"/>
<dbReference type="EMDB" id="EMD-34725"/>
<dbReference type="EMDB" id="EMD-36839"/>
<dbReference type="EMDB" id="EMD-36945"/>
<dbReference type="EMDB" id="EMD-38660"/>
<dbReference type="EMDB" id="EMD-40990"/>
<dbReference type="EMDB" id="EMD-40991"/>
<dbReference type="EMDB" id="EMD-40992"/>
<dbReference type="EMDB" id="EMD-40993"/>
<dbReference type="EMDB" id="EMD-40997"/>
<dbReference type="EMDB" id="EMD-40998"/>
<dbReference type="EMDB" id="EMD-40999"/>
<dbReference type="EMDB" id="EMD-41000"/>
<dbReference type="EMDB" id="EMD-41001"/>
<dbReference type="EMDB" id="EMD-41002"/>
<dbReference type="EMDB" id="EMD-42525"/>
<dbReference type="EMDB" id="EMD-42540"/>
<dbReference type="EMDB" id="EMD-4427"/>
<dbReference type="EMDB" id="EMD-4474"/>
<dbReference type="EMDB" id="EMD-4560"/>
<dbReference type="EMDB" id="EMD-4630"/>
<dbReference type="EMDB" id="EMD-4636"/>
<dbReference type="EMDB" id="EMD-4751"/>
<dbReference type="EMDB" id="EMD-4752"/>
<dbReference type="EMDB" id="EMD-4753"/>
<dbReference type="EMDB" id="EMD-4884"/>
<dbReference type="EMDB" id="EMD-50259"/>
<dbReference type="EMDB" id="EMD-8362"/>
<dbReference type="EMDB" id="EMD-8368"/>
<dbReference type="SMR" id="P0CX27"/>
<dbReference type="BioGRID" id="35667">
    <property type="interactions" value="114"/>
</dbReference>
<dbReference type="BioGRID" id="36574">
    <property type="interactions" value="45"/>
</dbReference>
<dbReference type="ComplexPortal" id="CPX-1601">
    <property type="entry name" value="60S cytosolic large ribosomal subunit"/>
</dbReference>
<dbReference type="FunCoup" id="P0CX27">
    <property type="interactions" value="884"/>
</dbReference>
<dbReference type="IntAct" id="P0CX27">
    <property type="interactions" value="10"/>
</dbReference>
<dbReference type="MINT" id="P0CX27"/>
<dbReference type="STRING" id="4932.YHR141C"/>
<dbReference type="iPTMnet" id="P0CX27"/>
<dbReference type="PaxDb" id="4932-YHR141C"/>
<dbReference type="PeptideAtlas" id="P0CX27"/>
<dbReference type="EnsemblFungi" id="YHR141C_mRNA">
    <property type="protein sequence ID" value="YHR141C"/>
    <property type="gene ID" value="YHR141C"/>
</dbReference>
<dbReference type="EnsemblFungi" id="YNL162W_mRNA">
    <property type="protein sequence ID" value="YNL162W"/>
    <property type="gene ID" value="YNL162W"/>
</dbReference>
<dbReference type="GeneID" id="855560"/>
<dbReference type="KEGG" id="sce:YHR141C"/>
<dbReference type="KEGG" id="sce:YNL162W"/>
<dbReference type="AGR" id="SGD:S000005106"/>
<dbReference type="SGD" id="S000005106">
    <property type="gene designation" value="RPL42A"/>
</dbReference>
<dbReference type="VEuPathDB" id="FungiDB:YHR141C"/>
<dbReference type="VEuPathDB" id="FungiDB:YNL162W"/>
<dbReference type="eggNOG" id="KOG3464">
    <property type="taxonomic scope" value="Eukaryota"/>
</dbReference>
<dbReference type="HOGENOM" id="CLU_114645_2_1_1"/>
<dbReference type="InParanoid" id="P0CX27"/>
<dbReference type="OMA" id="CKKHTIH"/>
<dbReference type="OrthoDB" id="2967263at2759"/>
<dbReference type="BioCyc" id="YEAST:G3O-33178-MONOMER"/>
<dbReference type="Reactome" id="R-SCE-156827">
    <property type="pathway name" value="L13a-mediated translational silencing of Ceruloplasmin expression"/>
</dbReference>
<dbReference type="Reactome" id="R-SCE-1799339">
    <property type="pathway name" value="SRP-dependent cotranslational protein targeting to membrane"/>
</dbReference>
<dbReference type="Reactome" id="R-SCE-72689">
    <property type="pathway name" value="Formation of a pool of free 40S subunits"/>
</dbReference>
<dbReference type="Reactome" id="R-SCE-72706">
    <property type="pathway name" value="GTP hydrolysis and joining of the 60S ribosomal subunit"/>
</dbReference>
<dbReference type="Reactome" id="R-SCE-975956">
    <property type="pathway name" value="Nonsense Mediated Decay (NMD) independent of the Exon Junction Complex (EJC)"/>
</dbReference>
<dbReference type="Reactome" id="R-SCE-975957">
    <property type="pathway name" value="Nonsense Mediated Decay (NMD) enhanced by the Exon Junction Complex (EJC)"/>
</dbReference>
<dbReference type="BioGRID-ORCS" id="855560">
    <property type="hits" value="10 hits in 10 CRISPR screens"/>
</dbReference>
<dbReference type="BioGRID-ORCS" id="856544">
    <property type="hits" value="1 hit in 10 CRISPR screens"/>
</dbReference>
<dbReference type="PRO" id="PR:P0CX27"/>
<dbReference type="Proteomes" id="UP000002311">
    <property type="component" value="Chromosome XIV"/>
</dbReference>
<dbReference type="RNAct" id="P0CX27">
    <property type="molecule type" value="protein"/>
</dbReference>
<dbReference type="ExpressionAtlas" id="P0CX27">
    <property type="expression patterns" value="baseline and differential"/>
</dbReference>
<dbReference type="GO" id="GO:0005829">
    <property type="term" value="C:cytosol"/>
    <property type="evidence" value="ECO:0000304"/>
    <property type="project" value="Reactome"/>
</dbReference>
<dbReference type="GO" id="GO:0022625">
    <property type="term" value="C:cytosolic large ribosomal subunit"/>
    <property type="evidence" value="ECO:0000314"/>
    <property type="project" value="SGD"/>
</dbReference>
<dbReference type="GO" id="GO:0003735">
    <property type="term" value="F:structural constituent of ribosome"/>
    <property type="evidence" value="ECO:0000305"/>
    <property type="project" value="SGD"/>
</dbReference>
<dbReference type="GO" id="GO:0002181">
    <property type="term" value="P:cytoplasmic translation"/>
    <property type="evidence" value="ECO:0000305"/>
    <property type="project" value="SGD"/>
</dbReference>
<dbReference type="GO" id="GO:0046677">
    <property type="term" value="P:response to antibiotic"/>
    <property type="evidence" value="ECO:0007669"/>
    <property type="project" value="UniProtKB-KW"/>
</dbReference>
<dbReference type="GO" id="GO:0046898">
    <property type="term" value="P:response to cycloheximide"/>
    <property type="evidence" value="ECO:0007669"/>
    <property type="project" value="UniProtKB-KW"/>
</dbReference>
<dbReference type="FunFam" id="3.10.450.80:FF:000001">
    <property type="entry name" value="60S ribosomal protein L44"/>
    <property type="match status" value="1"/>
</dbReference>
<dbReference type="Gene3D" id="3.10.450.80">
    <property type="match status" value="1"/>
</dbReference>
<dbReference type="InterPro" id="IPR000552">
    <property type="entry name" value="Ribosomal_eL44"/>
</dbReference>
<dbReference type="InterPro" id="IPR053708">
    <property type="entry name" value="Ribosomal_LSU_eL42"/>
</dbReference>
<dbReference type="InterPro" id="IPR011332">
    <property type="entry name" value="Ribosomal_zn-bd"/>
</dbReference>
<dbReference type="PANTHER" id="PTHR10369">
    <property type="entry name" value="60S RIBOSOMAL PROTEIN L36A/L44"/>
    <property type="match status" value="1"/>
</dbReference>
<dbReference type="Pfam" id="PF00935">
    <property type="entry name" value="Ribosomal_L44"/>
    <property type="match status" value="1"/>
</dbReference>
<dbReference type="SUPFAM" id="SSF57829">
    <property type="entry name" value="Zn-binding ribosomal proteins"/>
    <property type="match status" value="1"/>
</dbReference>
<dbReference type="PROSITE" id="PS01172">
    <property type="entry name" value="RIBOSOMAL_L44E"/>
    <property type="match status" value="1"/>
</dbReference>
<comment type="function">
    <text evidence="13">Component of the ribosome, a large ribonucleoprotein complex responsible for the synthesis of proteins in the cell. The small ribosomal subunit (SSU) binds messenger RNAs (mRNAs) and translates the encoded message by selecting cognate aminoacyl-transfer RNA (tRNA) molecules. The large subunit (LSU) contains the ribosomal catalytic site termed the peptidyl transferase center (PTC), which catalyzes the formation of peptide bonds, thereby polymerizing the amino acids delivered by tRNAs into a polypeptide chain. The nascent polypeptides leave the ribosome through a tunnel in the LSU and interact with protein factors that function in enzymatic processing, targeting, and the membrane insertion of nascent chains at the exit of the ribosomal tunnel.</text>
</comment>
<comment type="subunit">
    <text evidence="6 14">Component of the large ribosomal subunit (LSU). Mature yeast ribosomes consist of a small (40S) and a large (60S) subunit. The 40S small subunit contains 1 molecule of ribosomal RNA (18S rRNA) and 33 different proteins (encoded by 57 genes). The large 60S subunit contains 3 rRNA molecules (25S, 5.8S and 5S rRNA) and 46 different proteins (encoded by 81 genes) (PubMed:22096102, PubMed:9559554).</text>
</comment>
<comment type="subcellular location">
    <subcellularLocation>
        <location evidence="2 6">Cytoplasm</location>
    </subcellularLocation>
</comment>
<comment type="PTM">
    <text evidence="8">In wild-type cells, 78% of L42 is monomethylated at both Lys-40 and Lys-55, and 22% are a mixture of species with either residue monomethylated.</text>
</comment>
<comment type="mass spectrometry" mass="12100.729" method="Electrospray" evidence="1">
    <text>Monoisotopic mass with 2 methylation modifications.</text>
</comment>
<comment type="mass spectrometry" mass="12100.71" method="Electrospray" evidence="5">
    <text>Monoisotopic mass with N6-methyl-Lys-40 and N6-methyl-Lys-55.</text>
</comment>
<comment type="mass spectrometry" mass="12108.0" method="Electrospray" evidence="5">
    <text>With N6-methyl-Lys-40 and N6-methyl-Lys-55.</text>
</comment>
<comment type="miscellaneous">
    <text evidence="3">Present with 13600 molecules/cell in log phase SD medium.</text>
</comment>
<comment type="miscellaneous">
    <text evidence="12">There are 2 genes for eL42 in yeast.</text>
</comment>
<comment type="similarity">
    <text evidence="12">Belongs to the eukaryotic ribosomal protein eL42 family.</text>
</comment>
<comment type="sequence caution" evidence="12">
    <conflict type="erroneous gene model prediction">
        <sequence resource="EMBL-CDS" id="CAA96049"/>
    </conflict>
</comment>
<reference key="1">
    <citation type="journal article" date="1992" name="J. Bacteriol.">
        <title>Drastic alteration of cycloheximide sensitivity by substitution of one amino acid in the L41 ribosomal protein of yeasts.</title>
        <authorList>
            <person name="Kawai S."/>
            <person name="Murao S."/>
            <person name="Mochizuki M."/>
            <person name="Shibuya I."/>
            <person name="Yano K."/>
            <person name="Takagi M."/>
        </authorList>
    </citation>
    <scope>NUCLEOTIDE SEQUENCE [GENOMIC DNA]</scope>
    <scope>VARIANT GLN-56</scope>
</reference>
<reference key="2">
    <citation type="journal article" date="1996" name="Yeast">
        <title>The sequence of 36.8 kb from the left arm of chromosome XIV reveals 24 complete open reading frames: 18 correspond to new genes, one of which encodes a protein similar to the human myotonic dystrophy kinase.</title>
        <authorList>
            <person name="Nasr F."/>
            <person name="Becam A.-M."/>
            <person name="Herbert C.J."/>
        </authorList>
    </citation>
    <scope>NUCLEOTIDE SEQUENCE [GENOMIC DNA]</scope>
    <source>
        <strain>ATCC 96604 / S288c / FY1679</strain>
    </source>
</reference>
<reference key="3">
    <citation type="journal article" date="1997" name="Nature">
        <title>The nucleotide sequence of Saccharomyces cerevisiae chromosome XIV and its evolutionary implications.</title>
        <authorList>
            <person name="Philippsen P."/>
            <person name="Kleine K."/>
            <person name="Poehlmann R."/>
            <person name="Duesterhoeft A."/>
            <person name="Hamberg K."/>
            <person name="Hegemann J.H."/>
            <person name="Obermaier B."/>
            <person name="Urrestarazu L.A."/>
            <person name="Aert R."/>
            <person name="Albermann K."/>
            <person name="Altmann R."/>
            <person name="Andre B."/>
            <person name="Baladron V."/>
            <person name="Ballesta J.P.G."/>
            <person name="Becam A.-M."/>
            <person name="Beinhauer J.D."/>
            <person name="Boskovic J."/>
            <person name="Buitrago M.J."/>
            <person name="Bussereau F."/>
            <person name="Coster F."/>
            <person name="Crouzet M."/>
            <person name="D'Angelo M."/>
            <person name="Dal Pero F."/>
            <person name="De Antoni A."/>
            <person name="del Rey F."/>
            <person name="Doignon F."/>
            <person name="Domdey H."/>
            <person name="Dubois E."/>
            <person name="Fiedler T.A."/>
            <person name="Fleig U."/>
            <person name="Floeth M."/>
            <person name="Fritz C."/>
            <person name="Gaillardin C."/>
            <person name="Garcia-Cantalejo J.M."/>
            <person name="Glansdorff N."/>
            <person name="Goffeau A."/>
            <person name="Gueldener U."/>
            <person name="Herbert C.J."/>
            <person name="Heumann K."/>
            <person name="Heuss-Neitzel D."/>
            <person name="Hilbert H."/>
            <person name="Hinni K."/>
            <person name="Iraqui Houssaini I."/>
            <person name="Jacquet M."/>
            <person name="Jimenez A."/>
            <person name="Jonniaux J.-L."/>
            <person name="Karpfinger-Hartl L."/>
            <person name="Lanfranchi G."/>
            <person name="Lepingle A."/>
            <person name="Levesque H."/>
            <person name="Lyck R."/>
            <person name="Maftahi M."/>
            <person name="Mallet L."/>
            <person name="Maurer C.T.C."/>
            <person name="Messenguy F."/>
            <person name="Mewes H.-W."/>
            <person name="Moestl D."/>
            <person name="Nasr F."/>
            <person name="Nicaud J.-M."/>
            <person name="Niedenthal R.K."/>
            <person name="Pandolfo D."/>
            <person name="Pierard A."/>
            <person name="Piravandi E."/>
            <person name="Planta R.J."/>
            <person name="Pohl T.M."/>
            <person name="Purnelle B."/>
            <person name="Rebischung C."/>
            <person name="Remacha M.A."/>
            <person name="Revuelta J.L."/>
            <person name="Rinke M."/>
            <person name="Saiz J.E."/>
            <person name="Sartorello F."/>
            <person name="Scherens B."/>
            <person name="Sen-Gupta M."/>
            <person name="Soler-Mira A."/>
            <person name="Urbanus J.H.M."/>
            <person name="Valle G."/>
            <person name="Van Dyck L."/>
            <person name="Verhasselt P."/>
            <person name="Vierendeels F."/>
            <person name="Vissers S."/>
            <person name="Voet M."/>
            <person name="Volckaert G."/>
            <person name="Wach A."/>
            <person name="Wambutt R."/>
            <person name="Wedler H."/>
            <person name="Zollner A."/>
            <person name="Hani J."/>
        </authorList>
    </citation>
    <scope>NUCLEOTIDE SEQUENCE [LARGE SCALE GENOMIC DNA]</scope>
    <source>
        <strain>ATCC 204508 / S288c</strain>
    </source>
</reference>
<reference key="4">
    <citation type="journal article" date="2014" name="G3 (Bethesda)">
        <title>The reference genome sequence of Saccharomyces cerevisiae: Then and now.</title>
        <authorList>
            <person name="Engel S.R."/>
            <person name="Dietrich F.S."/>
            <person name="Fisk D.G."/>
            <person name="Binkley G."/>
            <person name="Balakrishnan R."/>
            <person name="Costanzo M.C."/>
            <person name="Dwight S.S."/>
            <person name="Hitz B.C."/>
            <person name="Karra K."/>
            <person name="Nash R.S."/>
            <person name="Weng S."/>
            <person name="Wong E.D."/>
            <person name="Lloyd P."/>
            <person name="Skrzypek M.S."/>
            <person name="Miyasato S.R."/>
            <person name="Simison M."/>
            <person name="Cherry J.M."/>
        </authorList>
    </citation>
    <scope>GENOME REANNOTATION</scope>
    <source>
        <strain>ATCC 204508 / S288c</strain>
    </source>
</reference>
<reference key="5">
    <citation type="journal article" date="1978" name="FEBS Lett.">
        <title>The primary structure of protein 44 from the large subunit of yeast ribosomes.</title>
        <authorList>
            <person name="Itoh T."/>
            <person name="Wittmann-Liebold B."/>
        </authorList>
    </citation>
    <scope>PROTEIN SEQUENCE OF 2-106</scope>
</reference>
<reference key="6">
    <citation type="journal article" date="1998" name="Yeast">
        <title>The list of cytoplasmic ribosomal proteins of Saccharomyces cerevisiae.</title>
        <authorList>
            <person name="Planta R.J."/>
            <person name="Mager W.H."/>
        </authorList>
    </citation>
    <scope>NOMENCLATURE</scope>
    <scope>SUBUNIT</scope>
</reference>
<reference key="7">
    <citation type="journal article" date="2002" name="Proc. Natl. Acad. Sci. U.S.A.">
        <title>Direct mass spectrometric analysis of intact proteins of the yeast large ribosomal subunit using capillary LC/FTICR.</title>
        <authorList>
            <person name="Lee S.-W."/>
            <person name="Berger S.J."/>
            <person name="Martinovic S."/>
            <person name="Pasa-Tolic L."/>
            <person name="Anderson G.A."/>
            <person name="Shen Y."/>
            <person name="Zhao R."/>
            <person name="Smith R.D."/>
        </authorList>
    </citation>
    <scope>MASS SPECTROMETRY</scope>
</reference>
<reference key="8">
    <citation type="journal article" date="2003" name="Nature">
        <title>Global analysis of protein localization in budding yeast.</title>
        <authorList>
            <person name="Huh W.-K."/>
            <person name="Falvo J.V."/>
            <person name="Gerke L.C."/>
            <person name="Carroll A.S."/>
            <person name="Howson R.W."/>
            <person name="Weissman J.S."/>
            <person name="O'Shea E.K."/>
        </authorList>
    </citation>
    <scope>SUBCELLULAR LOCATION [LARGE SCALE ANALYSIS]</scope>
</reference>
<reference key="9">
    <citation type="journal article" date="2003" name="Nature">
        <title>Global analysis of protein expression in yeast.</title>
        <authorList>
            <person name="Ghaemmaghami S."/>
            <person name="Huh W.-K."/>
            <person name="Bower K."/>
            <person name="Howson R.W."/>
            <person name="Belle A."/>
            <person name="Dephoure N."/>
            <person name="O'Shea E.K."/>
            <person name="Weissman J.S."/>
        </authorList>
    </citation>
    <scope>LEVEL OF PROTEIN EXPRESSION [LARGE SCALE ANALYSIS]</scope>
</reference>
<reference key="10">
    <citation type="journal article" date="2008" name="J. Biol. Chem.">
        <title>Identification of two SET domain proteins required for methylation of lysine residues in yeast ribosomal protein Rpl42ab.</title>
        <authorList>
            <person name="Webb K.J."/>
            <person name="Laganowsky A."/>
            <person name="Whitelegge J.P."/>
            <person name="Clarke S.G."/>
        </authorList>
    </citation>
    <scope>METHYLATION AT LYS-40 AND LYS-55</scope>
    <scope>MASS SPECTROMETRY</scope>
</reference>
<reference key="11">
    <citation type="journal article" date="2012" name="Proteomics">
        <title>Methylation of translation-associated proteins in Saccharomyces cerevisiae: Identification of methylated lysines and their methyltransferases.</title>
        <authorList>
            <person name="Couttas T.A."/>
            <person name="Raftery M.J."/>
            <person name="Padula M.P."/>
            <person name="Herbert B.R."/>
            <person name="Wilkins M.R."/>
        </authorList>
    </citation>
    <scope>METHYLATION AT LYS-40</scope>
</reference>
<reference key="12">
    <citation type="journal article" date="2014" name="Curr. Opin. Struct. Biol.">
        <title>A new system for naming ribosomal proteins.</title>
        <authorList>
            <person name="Ban N."/>
            <person name="Beckmann R."/>
            <person name="Cate J.H.D."/>
            <person name="Dinman J.D."/>
            <person name="Dragon F."/>
            <person name="Ellis S.R."/>
            <person name="Lafontaine D.L.J."/>
            <person name="Lindahl L."/>
            <person name="Liljas A."/>
            <person name="Lipton J.M."/>
            <person name="McAlear M.A."/>
            <person name="Moore P.B."/>
            <person name="Noller H.F."/>
            <person name="Ortega J."/>
            <person name="Panse V.G."/>
            <person name="Ramakrishnan V."/>
            <person name="Spahn C.M.T."/>
            <person name="Steitz T.A."/>
            <person name="Tchorzewski M."/>
            <person name="Tollervey D."/>
            <person name="Warren A.J."/>
            <person name="Williamson J.R."/>
            <person name="Wilson D."/>
            <person name="Yonath A."/>
            <person name="Yusupov M."/>
        </authorList>
    </citation>
    <scope>NOMENCLATURE</scope>
</reference>
<reference key="13">
    <citation type="journal article" date="2014" name="J. Proteome Res.">
        <title>Stoichiometry of Saccharomyces cerevisiae lysine methylation: insights into non-histone protein lysine methyltransferase activity.</title>
        <authorList>
            <person name="Hart-Smith G."/>
            <person name="Chia S.Z."/>
            <person name="Low J.K."/>
            <person name="McKay M.J."/>
            <person name="Molloy M.P."/>
            <person name="Wilkins M.R."/>
        </authorList>
    </citation>
    <scope>METHYLATION AT LYS-40 BY RKM3</scope>
    <scope>METHYLATION AT LYS-55 BY RKM4</scope>
</reference>
<reference key="14">
    <citation type="journal article" date="2001" name="Cell">
        <title>Structure of the 80S ribosome from Saccharomyces cerevisiae -- tRNA-ribosome and subunit-subunit interactions.</title>
        <authorList>
            <person name="Spahn C.M.T."/>
            <person name="Beckmann R."/>
            <person name="Eswar N."/>
            <person name="Penczek P.A."/>
            <person name="Sali A."/>
            <person name="Blobel G."/>
            <person name="Frank J."/>
        </authorList>
    </citation>
    <scope>3D-STRUCTURE MODELING OF 2-92</scope>
    <scope>ELECTRON MICROSCOPY</scope>
</reference>
<reference key="15">
    <citation type="journal article" date="2004" name="EMBO J.">
        <title>Domain movements of elongation factor eEF2 and the eukaryotic 80S ribosome facilitate tRNA translocation.</title>
        <authorList>
            <person name="Spahn C.M.T."/>
            <person name="Gomez-Lorenzo M.G."/>
            <person name="Grassucci R.A."/>
            <person name="Joergensen R."/>
            <person name="Andersen G.R."/>
            <person name="Beckmann R."/>
            <person name="Penczek P.A."/>
            <person name="Ballesta J.P.G."/>
            <person name="Frank J."/>
        </authorList>
    </citation>
    <scope>3D-STRUCTURE MODELING</scope>
    <scope>ELECTRON MICROSCOPY</scope>
</reference>
<reference key="16">
    <citation type="journal article" date="2010" name="Science">
        <title>Crystal structure of the eukaryotic ribosome.</title>
        <authorList>
            <person name="Ben-Shem A."/>
            <person name="Jenner L."/>
            <person name="Yusupova G."/>
            <person name="Yusupov M."/>
        </authorList>
    </citation>
    <scope>X-RAY CRYSTALLOGRAPHY (4.0 ANGSTROMS) OF 80S RIBOSOME</scope>
</reference>
<reference key="17">
    <citation type="journal article" date="2011" name="Science">
        <title>The structure of the eukaryotic ribosome at 3.0 A resolution.</title>
        <authorList>
            <person name="Ben-Shem A."/>
            <person name="Garreau de Loubresse N."/>
            <person name="Melnikov S."/>
            <person name="Jenner L."/>
            <person name="Yusupova G."/>
            <person name="Yusupov M."/>
        </authorList>
    </citation>
    <scope>X-RAY CRYSTALLOGRAPHY (3.0 ANGSTROMS) OF 80S RIBOSOME</scope>
    <scope>SUBUNIT</scope>
    <scope>SUBCELLULAR LOCATION</scope>
</reference>
<evidence type="ECO:0000269" key="1">
    <source>
    </source>
</evidence>
<evidence type="ECO:0000269" key="2">
    <source>
    </source>
</evidence>
<evidence type="ECO:0000269" key="3">
    <source>
    </source>
</evidence>
<evidence type="ECO:0000269" key="4">
    <source>
    </source>
</evidence>
<evidence type="ECO:0000269" key="5">
    <source>
    </source>
</evidence>
<evidence type="ECO:0000269" key="6">
    <source>
    </source>
</evidence>
<evidence type="ECO:0000269" key="7">
    <source>
    </source>
</evidence>
<evidence type="ECO:0000269" key="8">
    <source>
    </source>
</evidence>
<evidence type="ECO:0000269" key="9">
    <source>
    </source>
</evidence>
<evidence type="ECO:0000303" key="10">
    <source>
    </source>
</evidence>
<evidence type="ECO:0000303" key="11">
    <source>
    </source>
</evidence>
<evidence type="ECO:0000305" key="12"/>
<evidence type="ECO:0000305" key="13">
    <source>
    </source>
</evidence>
<evidence type="ECO:0000305" key="14">
    <source>
    </source>
</evidence>
<evidence type="ECO:0007829" key="15">
    <source>
        <dbReference type="PDB" id="4U4R"/>
    </source>
</evidence>
<accession>P0CX27</accession>
<accession>D3DL90</accession>
<accession>P02405</accession>
<feature type="initiator methionine" description="Removed" evidence="9">
    <location>
        <position position="1"/>
    </location>
</feature>
<feature type="chain" id="PRO_0000149147" description="Large ribosomal subunit protein eL42A">
    <location>
        <begin position="2"/>
        <end position="106"/>
    </location>
</feature>
<feature type="modified residue" description="N6-methyllysine; by RKM3" evidence="5 7 8">
    <location>
        <position position="40"/>
    </location>
</feature>
<feature type="modified residue" description="N6-methyllysine; by RKM4" evidence="5 8">
    <location>
        <position position="55"/>
    </location>
</feature>
<feature type="sequence variant" description="Confers resistance to cycloheximide, an inhibitor of polypeptide elongation." evidence="4">
    <original>P</original>
    <variation>Q</variation>
    <location>
        <position position="56"/>
    </location>
</feature>
<feature type="sequence conflict" description="In Ref. 5; AA sequence." evidence="12" ref="5">
    <original>KR</original>
    <variation>RK</variation>
    <location>
        <begin position="40"/>
        <end position="41"/>
    </location>
</feature>
<feature type="sequence conflict" description="In Ref. 5; AA sequence." evidence="12" ref="5">
    <location>
        <begin position="88"/>
        <end position="89"/>
    </location>
</feature>
<feature type="strand" evidence="15">
    <location>
        <begin position="6"/>
        <end position="12"/>
    </location>
</feature>
<feature type="turn" evidence="15">
    <location>
        <begin position="15"/>
        <end position="17"/>
    </location>
</feature>
<feature type="strand" evidence="15">
    <location>
        <begin position="19"/>
        <end position="27"/>
    </location>
</feature>
<feature type="helix" evidence="15">
    <location>
        <begin position="38"/>
        <end position="47"/>
    </location>
</feature>
<feature type="strand" evidence="15">
    <location>
        <begin position="48"/>
        <end position="52"/>
    </location>
</feature>
<feature type="strand" evidence="15">
    <location>
        <begin position="66"/>
        <end position="74"/>
    </location>
</feature>
<feature type="turn" evidence="15">
    <location>
        <begin position="75"/>
        <end position="77"/>
    </location>
</feature>
<feature type="strand" evidence="15">
    <location>
        <begin position="80"/>
        <end position="90"/>
    </location>
</feature>
<feature type="strand" evidence="15">
    <location>
        <begin position="92"/>
        <end position="94"/>
    </location>
</feature>
<organism>
    <name type="scientific">Saccharomyces cerevisiae (strain ATCC 204508 / S288c)</name>
    <name type="common">Baker's yeast</name>
    <dbReference type="NCBI Taxonomy" id="559292"/>
    <lineage>
        <taxon>Eukaryota</taxon>
        <taxon>Fungi</taxon>
        <taxon>Dikarya</taxon>
        <taxon>Ascomycota</taxon>
        <taxon>Saccharomycotina</taxon>
        <taxon>Saccharomycetes</taxon>
        <taxon>Saccharomycetales</taxon>
        <taxon>Saccharomycetaceae</taxon>
        <taxon>Saccharomyces</taxon>
    </lineage>
</organism>
<proteinExistence type="evidence at protein level"/>
<protein>
    <recommendedName>
        <fullName evidence="10">Large ribosomal subunit protein eL42A</fullName>
    </recommendedName>
    <alternativeName>
        <fullName evidence="11">60S ribosomal protein L42-A</fullName>
    </alternativeName>
    <alternativeName>
        <fullName>L41</fullName>
    </alternativeName>
    <alternativeName>
        <fullName>YL27</fullName>
    </alternativeName>
    <alternativeName>
        <fullName>YP44</fullName>
    </alternativeName>
</protein>
<gene>
    <name evidence="11" type="primary">RPL42A</name>
    <name type="synonym">RPL41A</name>
    <name type="synonym">SCL41A</name>
    <name type="ordered locus">YNL162W</name>
    <name type="ORF">N1722</name>
</gene>
<sequence length="106" mass="12212">MVNVPKTRKTYCKGKTCRKHTQHKVTQYKAGKASLFAQGKRRYDRKQSGFGGQTKPVFHKKAKTTKKVVLRLECVKCKTRAQLTLKRCKHFELGGEKKQKGQALQF</sequence>